<proteinExistence type="inferred from homology"/>
<accession>P11081</accession>
<comment type="function">
    <text evidence="1">The alpha subunit is responsible for the aldol cleavage of indoleglycerol phosphate to indole and glyceraldehyde 3-phosphate.</text>
</comment>
<comment type="catalytic activity">
    <reaction evidence="1">
        <text>(1S,2R)-1-C-(indol-3-yl)glycerol 3-phosphate + L-serine = D-glyceraldehyde 3-phosphate + L-tryptophan + H2O</text>
        <dbReference type="Rhea" id="RHEA:10532"/>
        <dbReference type="ChEBI" id="CHEBI:15377"/>
        <dbReference type="ChEBI" id="CHEBI:33384"/>
        <dbReference type="ChEBI" id="CHEBI:57912"/>
        <dbReference type="ChEBI" id="CHEBI:58866"/>
        <dbReference type="ChEBI" id="CHEBI:59776"/>
        <dbReference type="EC" id="4.2.1.20"/>
    </reaction>
</comment>
<comment type="pathway">
    <text evidence="1">Amino-acid biosynthesis; L-tryptophan biosynthesis; L-tryptophan from chorismate: step 5/5.</text>
</comment>
<comment type="subunit">
    <text evidence="1">Tetramer of two alpha and two beta chains.</text>
</comment>
<comment type="similarity">
    <text evidence="1">Belongs to the TrpA family.</text>
</comment>
<feature type="chain" id="PRO_0000098826" description="Tryptophan synthase alpha chain">
    <location>
        <begin position="1"/>
        <end position="269"/>
    </location>
</feature>
<feature type="active site" description="Proton acceptor" evidence="1">
    <location>
        <position position="49"/>
    </location>
</feature>
<feature type="active site" description="Proton acceptor" evidence="1">
    <location>
        <position position="60"/>
    </location>
</feature>
<evidence type="ECO:0000255" key="1">
    <source>
        <dbReference type="HAMAP-Rule" id="MF_00131"/>
    </source>
</evidence>
<name>TRPA_PSEPU</name>
<dbReference type="EC" id="4.2.1.20" evidence="1"/>
<dbReference type="EMBL" id="X13299">
    <property type="protein sequence ID" value="CAA31662.1"/>
    <property type="molecule type" value="Genomic_DNA"/>
</dbReference>
<dbReference type="PIR" id="A30768">
    <property type="entry name" value="A30768"/>
</dbReference>
<dbReference type="RefSeq" id="WP_019098079.1">
    <property type="nucleotide sequence ID" value="NZ_AP022324.1"/>
</dbReference>
<dbReference type="SMR" id="P11081"/>
<dbReference type="eggNOG" id="COG0159">
    <property type="taxonomic scope" value="Bacteria"/>
</dbReference>
<dbReference type="UniPathway" id="UPA00035">
    <property type="reaction ID" value="UER00044"/>
</dbReference>
<dbReference type="GO" id="GO:0005829">
    <property type="term" value="C:cytosol"/>
    <property type="evidence" value="ECO:0007669"/>
    <property type="project" value="TreeGrafter"/>
</dbReference>
<dbReference type="GO" id="GO:0004834">
    <property type="term" value="F:tryptophan synthase activity"/>
    <property type="evidence" value="ECO:0007669"/>
    <property type="project" value="UniProtKB-UniRule"/>
</dbReference>
<dbReference type="CDD" id="cd04724">
    <property type="entry name" value="Tryptophan_synthase_alpha"/>
    <property type="match status" value="1"/>
</dbReference>
<dbReference type="FunFam" id="3.20.20.70:FF:000037">
    <property type="entry name" value="Tryptophan synthase alpha chain"/>
    <property type="match status" value="1"/>
</dbReference>
<dbReference type="Gene3D" id="3.20.20.70">
    <property type="entry name" value="Aldolase class I"/>
    <property type="match status" value="1"/>
</dbReference>
<dbReference type="HAMAP" id="MF_00131">
    <property type="entry name" value="Trp_synth_alpha"/>
    <property type="match status" value="1"/>
</dbReference>
<dbReference type="InterPro" id="IPR013785">
    <property type="entry name" value="Aldolase_TIM"/>
</dbReference>
<dbReference type="InterPro" id="IPR011060">
    <property type="entry name" value="RibuloseP-bd_barrel"/>
</dbReference>
<dbReference type="InterPro" id="IPR018204">
    <property type="entry name" value="Trp_synthase_alpha_AS"/>
</dbReference>
<dbReference type="InterPro" id="IPR002028">
    <property type="entry name" value="Trp_synthase_suA"/>
</dbReference>
<dbReference type="NCBIfam" id="TIGR00262">
    <property type="entry name" value="trpA"/>
    <property type="match status" value="1"/>
</dbReference>
<dbReference type="PANTHER" id="PTHR43406:SF1">
    <property type="entry name" value="TRYPTOPHAN SYNTHASE ALPHA CHAIN, CHLOROPLASTIC"/>
    <property type="match status" value="1"/>
</dbReference>
<dbReference type="PANTHER" id="PTHR43406">
    <property type="entry name" value="TRYPTOPHAN SYNTHASE, ALPHA CHAIN"/>
    <property type="match status" value="1"/>
</dbReference>
<dbReference type="Pfam" id="PF00290">
    <property type="entry name" value="Trp_syntA"/>
    <property type="match status" value="1"/>
</dbReference>
<dbReference type="SUPFAM" id="SSF51366">
    <property type="entry name" value="Ribulose-phoshate binding barrel"/>
    <property type="match status" value="1"/>
</dbReference>
<dbReference type="PROSITE" id="PS00167">
    <property type="entry name" value="TRP_SYNTHASE_ALPHA"/>
    <property type="match status" value="1"/>
</dbReference>
<protein>
    <recommendedName>
        <fullName evidence="1">Tryptophan synthase alpha chain</fullName>
        <ecNumber evidence="1">4.2.1.20</ecNumber>
    </recommendedName>
</protein>
<sequence length="269" mass="28460">MSRLEQRFAELKAEGRSALVTFVTAGDPGYDASLQILKGLPAAGADVIELGMPFTDPMADGVAIQLATLRALEAGQTLAKTLQMVREFRVDNHTTPIVLMGYYNPIHRFGVEKFVAEAKQAGVDGLIIVDLPPEHDAELATPAQAAGIDFIRLTTPTTDDARLPRVLERSSGFVYYVSVAGVTGAGSATTEHVTEAIARLRRHTDLPISVGFGIRTPEQAANIARLADGVVVGSALVDKIAQATSADQAVNDVLSLCSALAEGVRGARR</sequence>
<reference key="1">
    <citation type="journal article" date="1989" name="Biochimie">
        <title>DNA sequence of the tryptophan synthase genes of Pseudomonas putida.</title>
        <authorList>
            <person name="Eberly L."/>
            <person name="Crawford I.P."/>
        </authorList>
    </citation>
    <scope>NUCLEOTIDE SEQUENCE [GENOMIC DNA]</scope>
    <source>
        <strain>PPG1 C1S</strain>
    </source>
</reference>
<gene>
    <name evidence="1" type="primary">trpA</name>
</gene>
<organism>
    <name type="scientific">Pseudomonas putida</name>
    <name type="common">Arthrobacter siderocapsulatus</name>
    <dbReference type="NCBI Taxonomy" id="303"/>
    <lineage>
        <taxon>Bacteria</taxon>
        <taxon>Pseudomonadati</taxon>
        <taxon>Pseudomonadota</taxon>
        <taxon>Gammaproteobacteria</taxon>
        <taxon>Pseudomonadales</taxon>
        <taxon>Pseudomonadaceae</taxon>
        <taxon>Pseudomonas</taxon>
    </lineage>
</organism>
<keyword id="KW-0028">Amino-acid biosynthesis</keyword>
<keyword id="KW-0057">Aromatic amino acid biosynthesis</keyword>
<keyword id="KW-0456">Lyase</keyword>
<keyword id="KW-0822">Tryptophan biosynthesis</keyword>